<protein>
    <recommendedName>
        <fullName>Proteasome component ECM29</fullName>
    </recommendedName>
    <alternativeName>
        <fullName>Extracellular mutant protein 29</fullName>
    </alternativeName>
</protein>
<feature type="initiator methionine" description="Removed" evidence="6">
    <location>
        <position position="1"/>
    </location>
</feature>
<feature type="chain" id="PRO_0000212558" description="Proteasome component ECM29">
    <location>
        <begin position="2"/>
        <end position="1868"/>
    </location>
</feature>
<feature type="repeat" description="HEAT 1">
    <location>
        <begin position="32"/>
        <end position="69"/>
    </location>
</feature>
<feature type="repeat" description="HEAT 2">
    <location>
        <begin position="116"/>
        <end position="153"/>
    </location>
</feature>
<feature type="repeat" description="HEAT 3">
    <location>
        <begin position="256"/>
        <end position="292"/>
    </location>
</feature>
<feature type="repeat" description="HEAT 4">
    <location>
        <begin position="313"/>
        <end position="351"/>
    </location>
</feature>
<feature type="repeat" description="HEAT 5">
    <location>
        <begin position="384"/>
        <end position="422"/>
    </location>
</feature>
<feature type="repeat" description="HEAT 6">
    <location>
        <begin position="439"/>
        <end position="476"/>
    </location>
</feature>
<feature type="repeat" description="HEAT 7">
    <location>
        <begin position="590"/>
        <end position="627"/>
    </location>
</feature>
<feature type="repeat" description="HEAT 8">
    <location>
        <begin position="707"/>
        <end position="745"/>
    </location>
</feature>
<feature type="repeat" description="HEAT 9">
    <location>
        <begin position="748"/>
        <end position="780"/>
    </location>
</feature>
<feature type="repeat" description="HEAT 10">
    <location>
        <begin position="781"/>
        <end position="818"/>
    </location>
</feature>
<feature type="repeat" description="HEAT 11">
    <location>
        <begin position="846"/>
        <end position="885"/>
    </location>
</feature>
<feature type="repeat" description="HEAT 12">
    <location>
        <begin position="945"/>
        <end position="982"/>
    </location>
</feature>
<feature type="repeat" description="HEAT 13">
    <location>
        <begin position="988"/>
        <end position="1025"/>
    </location>
</feature>
<feature type="repeat" description="HEAT 14">
    <location>
        <begin position="1030"/>
        <end position="1067"/>
    </location>
</feature>
<feature type="repeat" description="HEAT 15">
    <location>
        <begin position="1137"/>
        <end position="1174"/>
    </location>
</feature>
<feature type="repeat" description="HEAT 16">
    <location>
        <begin position="1178"/>
        <end position="1215"/>
    </location>
</feature>
<feature type="repeat" description="HEAT 17">
    <location>
        <begin position="1272"/>
        <end position="1311"/>
    </location>
</feature>
<feature type="repeat" description="HEAT 18">
    <location>
        <begin position="1361"/>
        <end position="1398"/>
    </location>
</feature>
<feature type="repeat" description="HEAT 19">
    <location>
        <begin position="1422"/>
        <end position="1459"/>
    </location>
</feature>
<feature type="repeat" description="HEAT 20">
    <location>
        <begin position="1503"/>
        <end position="1540"/>
    </location>
</feature>
<feature type="repeat" description="HEAT 21">
    <location>
        <begin position="1544"/>
        <end position="1581"/>
    </location>
</feature>
<feature type="repeat" description="HEAT 22">
    <location>
        <begin position="1649"/>
        <end position="1687"/>
    </location>
</feature>
<feature type="repeat" description="HEAT 23">
    <location>
        <begin position="1746"/>
        <end position="1785"/>
    </location>
</feature>
<feature type="repeat" description="HEAT 24">
    <location>
        <begin position="1830"/>
        <end position="1867"/>
    </location>
</feature>
<feature type="modified residue" description="N-acetylserine" evidence="6">
    <location>
        <position position="2"/>
    </location>
</feature>
<feature type="modified residue" description="Phosphoserine" evidence="5">
    <location>
        <position position="1692"/>
    </location>
</feature>
<reference key="1">
    <citation type="journal article" date="1994" name="Science">
        <title>Complete nucleotide sequence of Saccharomyces cerevisiae chromosome VIII.</title>
        <authorList>
            <person name="Johnston M."/>
            <person name="Andrews S."/>
            <person name="Brinkman R."/>
            <person name="Cooper J."/>
            <person name="Ding H."/>
            <person name="Dover J."/>
            <person name="Du Z."/>
            <person name="Favello A."/>
            <person name="Fulton L."/>
            <person name="Gattung S."/>
            <person name="Geisel C."/>
            <person name="Kirsten J."/>
            <person name="Kucaba T."/>
            <person name="Hillier L.W."/>
            <person name="Jier M."/>
            <person name="Johnston L."/>
            <person name="Langston Y."/>
            <person name="Latreille P."/>
            <person name="Louis E.J."/>
            <person name="Macri C."/>
            <person name="Mardis E."/>
            <person name="Menezes S."/>
            <person name="Mouser L."/>
            <person name="Nhan M."/>
            <person name="Rifkin L."/>
            <person name="Riles L."/>
            <person name="St Peter H."/>
            <person name="Trevaskis E."/>
            <person name="Vaughan K."/>
            <person name="Vignati D."/>
            <person name="Wilcox L."/>
            <person name="Wohldman P."/>
            <person name="Waterston R."/>
            <person name="Wilson R."/>
            <person name="Vaudin M."/>
        </authorList>
    </citation>
    <scope>NUCLEOTIDE SEQUENCE [LARGE SCALE GENOMIC DNA]</scope>
    <source>
        <strain>ATCC 204508 / S288c</strain>
    </source>
</reference>
<reference key="2">
    <citation type="journal article" date="2014" name="G3 (Bethesda)">
        <title>The reference genome sequence of Saccharomyces cerevisiae: Then and now.</title>
        <authorList>
            <person name="Engel S.R."/>
            <person name="Dietrich F.S."/>
            <person name="Fisk D.G."/>
            <person name="Binkley G."/>
            <person name="Balakrishnan R."/>
            <person name="Costanzo M.C."/>
            <person name="Dwight S.S."/>
            <person name="Hitz B.C."/>
            <person name="Karra K."/>
            <person name="Nash R.S."/>
            <person name="Weng S."/>
            <person name="Wong E.D."/>
            <person name="Lloyd P."/>
            <person name="Skrzypek M.S."/>
            <person name="Miyasato S.R."/>
            <person name="Simison M."/>
            <person name="Cherry J.M."/>
        </authorList>
    </citation>
    <scope>GENOME REANNOTATION</scope>
    <source>
        <strain>ATCC 204508 / S288c</strain>
    </source>
</reference>
<reference key="3">
    <citation type="journal article" date="1997" name="Genetics">
        <title>Large scale identification of genes involved in cell surface biosynthesis and architecture in Saccharomyces cerevisiae.</title>
        <authorList>
            <person name="Lussier M."/>
            <person name="White A.-M."/>
            <person name="Sheraton J."/>
            <person name="di Paolo T."/>
            <person name="Treadwell J."/>
            <person name="Southard S.B."/>
            <person name="Horenstein C.I."/>
            <person name="Chen-Weiner J."/>
            <person name="Ram A.F.J."/>
            <person name="Kapteyn J.C."/>
            <person name="Roemer T.W."/>
            <person name="Vo D.H."/>
            <person name="Bondoc D.C."/>
            <person name="Hall J."/>
            <person name="Zhong W.-W."/>
            <person name="Sdicu A.-M."/>
            <person name="Davies J."/>
            <person name="Klis F.M."/>
            <person name="Robbins P.W."/>
            <person name="Bussey H."/>
        </authorList>
    </citation>
    <scope>IDENTIFICATION</scope>
</reference>
<reference key="4">
    <citation type="journal article" date="2002" name="Mol. Cell">
        <title>Multiple associated proteins regulate proteasome structure and function.</title>
        <authorList>
            <person name="Leggett D.S."/>
            <person name="Hanna J."/>
            <person name="Borodovsky A."/>
            <person name="Crosas B."/>
            <person name="Schmidt M."/>
            <person name="Baker R.T."/>
            <person name="Walz T."/>
            <person name="Ploegh H."/>
            <person name="Finley D."/>
        </authorList>
    </citation>
    <scope>FUNCTION</scope>
    <scope>IDENTIFICATION BY MASS SPECTROMETRY</scope>
    <scope>IDENTIFICATION IN PROTEASOME COMPLEX</scope>
</reference>
<reference key="5">
    <citation type="journal article" date="2003" name="Nature">
        <title>Global analysis of protein localization in budding yeast.</title>
        <authorList>
            <person name="Huh W.-K."/>
            <person name="Falvo J.V."/>
            <person name="Gerke L.C."/>
            <person name="Carroll A.S."/>
            <person name="Howson R.W."/>
            <person name="Weissman J.S."/>
            <person name="O'Shea E.K."/>
        </authorList>
    </citation>
    <scope>SUBCELLULAR LOCATION [LARGE SCALE ANALYSIS]</scope>
</reference>
<reference key="6">
    <citation type="journal article" date="2003" name="Nature">
        <title>Global analysis of protein expression in yeast.</title>
        <authorList>
            <person name="Ghaemmaghami S."/>
            <person name="Huh W.-K."/>
            <person name="Bower K."/>
            <person name="Howson R.W."/>
            <person name="Belle A."/>
            <person name="Dephoure N."/>
            <person name="O'Shea E.K."/>
            <person name="Weissman J.S."/>
        </authorList>
    </citation>
    <scope>LEVEL OF PROTEIN EXPRESSION [LARGE SCALE ANALYSIS]</scope>
</reference>
<reference key="7">
    <citation type="journal article" date="2008" name="Mol. Cell. Proteomics">
        <title>A multidimensional chromatography technology for in-depth phosphoproteome analysis.</title>
        <authorList>
            <person name="Albuquerque C.P."/>
            <person name="Smolka M.B."/>
            <person name="Payne S.H."/>
            <person name="Bafna V."/>
            <person name="Eng J."/>
            <person name="Zhou H."/>
        </authorList>
    </citation>
    <scope>PHOSPHORYLATION [LARGE SCALE ANALYSIS] AT SER-1692</scope>
    <scope>IDENTIFICATION BY MASS SPECTROMETRY [LARGE SCALE ANALYSIS]</scope>
</reference>
<reference key="8">
    <citation type="journal article" date="2012" name="Proc. Natl. Acad. Sci. U.S.A.">
        <title>N-terminal acetylome analyses and functional insights of the N-terminal acetyltransferase NatB.</title>
        <authorList>
            <person name="Van Damme P."/>
            <person name="Lasa M."/>
            <person name="Polevoda B."/>
            <person name="Gazquez C."/>
            <person name="Elosegui-Artola A."/>
            <person name="Kim D.S."/>
            <person name="De Juan-Pardo E."/>
            <person name="Demeyer K."/>
            <person name="Hole K."/>
            <person name="Larrea E."/>
            <person name="Timmerman E."/>
            <person name="Prieto J."/>
            <person name="Arnesen T."/>
            <person name="Sherman F."/>
            <person name="Gevaert K."/>
            <person name="Aldabe R."/>
        </authorList>
    </citation>
    <scope>ACETYLATION [LARGE SCALE ANALYSIS] AT SER-2</scope>
    <scope>CLEAVAGE OF INITIATOR METHIONINE [LARGE SCALE ANALYSIS]</scope>
    <scope>IDENTIFICATION BY MASS SPECTROMETRY [LARGE SCALE ANALYSIS]</scope>
</reference>
<gene>
    <name type="primary">ECM29</name>
    <name type="ordered locus">YHL030W</name>
</gene>
<name>ECM29_YEAST</name>
<comment type="function">
    <text evidence="1">Stabilizes the proteasome holoenzyme, probably by tethering the 20S proteolytic core particle and the 19S regulatory particle. The proteasome is a multicatalytic proteinase complex which is characterized by its ability to cleave peptides with Arg, Phe, Tyr, Leu, and Glu adjacent to the leaving group at neutral or slightly basic pH. The proteasome has an ATP-dependent proteolytic activity.</text>
</comment>
<comment type="subunit">
    <text evidence="1">Component of the proteasome. ECM29 binds to both proteasome 19S and 20S particles.</text>
</comment>
<comment type="subcellular location">
    <subcellularLocation>
        <location evidence="2">Cytoplasm</location>
    </subcellularLocation>
    <subcellularLocation>
        <location evidence="2">Nucleus</location>
    </subcellularLocation>
</comment>
<comment type="miscellaneous">
    <text evidence="3">Present with 2950 molecules/cell in log phase SD medium.</text>
</comment>
<comment type="similarity">
    <text evidence="4">Belongs to the ECM29 family.</text>
</comment>
<sequence>MSISSDEAKEKQLVEKAELRLAIADSPQKFETNLQTFLPPLLLKLASPHASVRTAVFSALKNLISRINTLPQVQLPVRALIVQAKEPNLAAQQDSTNVRLYSLLLASKGIDRLSLQDRQQLLPLVVSNISCLTGTVAARMFHILLKLILEWVAPQESSHEQEEFVQFLQLDNDGFSFLMRQFTRFFLLVPSKQVQVSQQPLSRGYTCPGLSLTDVAFFTYDAGVTFNKEQLNKFKKAIFQFVCRGMAATQTIEQSPRMIELMEFLCVVSTDSTNLSDDAAQFMKRFPMPYENEEFITFLQTLYIGNTANGRPPVKAILQEKILSILNRSHFATTKAECISLICSIGLHSSEYKLRSLTLSFIRHVAKLNYKNLNPASSSPSSTDFSTCIVSLIRNNLHAEGWPKLQLGPQTPAFNTAILQRQLQYETLGDILKRDFELVSDLSYIEFLFESLKNDLPQFRSSIQESLLSLVGHLSILPQQSKLKLKNLLRKNLSIDEQQREDNNDAVNSIMALKFVSIKFTNAAFPFHDPEARLFNIWGTVRTNRFDIIEESFKGLQPFWFRVNNASINTSATVKTSDLLGSHLSETEFPPFREFLQVLIDQLDSEAASITRKSLNNAVRFSKQCLISNAIYGKKTMVIQDEDWSVRIDKALELDDTVVSRVNEMVQGMNDDIFIRYLTLLSNEFTATNSKGEQIAIFPYQDPIFGSVLLTLLNFVSNNVLRRLEILVPDLYHLVIMKFQSLSDNDLAVCATIIGIISTAIADSTHVKRITKIAQSQTMAETYVASYVVPRLYLKDQTNHIESDSILNLLNILTTHLSHPGTNKDMILKLVCQVTKFGLLLQVSAQERKDFLKKVMDTIQDKLINDVTAIQTWSYLSLYSTDLENSSLFQEKLLETNVSKQNDFLFSVGESLSVVAGKWSSKYLIKQIDIPNFNVEIMQQKFPATNVTTILDEIFSGCDSTKPSLRKASCIWLLSYIQYLGHLPEVSSKCNDIHLRFMRFLADRDEFIQDSAARGLSLVYEIGGSDLKESMVKGLLKSFTESTAGSASTSATGISGSVSEETELFEPGVLNTGDGSISTYKDILNLASEVGDPALVYKFMSLAKSSALWSSRKGIAFGLGAIMSKSSLEELLLKDQQTAKKLIPKLYRYRFDPFQAVSRSMTDIWNTLIPESSLTISLYFNDILDELLCGMANKEWRVREASTSALLQLIQSQPQEKFSEKMLKIWTMAFRTMDDIKDSVREVGTKFTTVLAKILARSIDVEKGVNPTKSKEILDNILPFLWGPHGLNSDAEEVRNFALTTLIDLVKHSPGAIKPFTPKLIYDFITLFSSIEPQVINYLALNAANYNIDANVIDTQRKNGVTNSPLFQTIEKLINNSDDCMMEEIINVVIKASRKSVGLPSKVASSLVIIILVKRYSIEMKPYSGKLLKVCLTMFEDRNESVNIAFAISMGYLFKVSALDKCIKYSEKLITKYFEPTSTENNKKVVGTAIDSILNYAKSEFDNVASVFMPLIFIACNDEDKDLETLYNKIWTEASSSGAGTVKLYLPEILNVLCVNIKSNDFSIRKTCAKSVIQLCGGINDSIPYPQIVKLFDISREALSGRSWDGKEHIVAALVSLTEKFSQTVADNNDLQESINHVMYTEVSRKSMKYVKKILPLYARYINVNPQEETITFLIEKAKEMIRLLGSESDDSEGSIKQTSDESTIKRIKPNTEITQKSSKENIENEEYVINLLKVSVDICNNSKSRYPMNLLEFIIDEIAYLFHNDRIIHTWRTQLAASEIGISIVGRFSTISSADFIQNVGRLWDQTFPINCNKETIENVKLQMIKFGGLIIQKIPSLQNNIEENLRLLNSIDSTSRIELELKNIGL</sequence>
<accession>P38737</accession>
<accession>D3DKT8</accession>
<proteinExistence type="evidence at protein level"/>
<organism>
    <name type="scientific">Saccharomyces cerevisiae (strain ATCC 204508 / S288c)</name>
    <name type="common">Baker's yeast</name>
    <dbReference type="NCBI Taxonomy" id="559292"/>
    <lineage>
        <taxon>Eukaryota</taxon>
        <taxon>Fungi</taxon>
        <taxon>Dikarya</taxon>
        <taxon>Ascomycota</taxon>
        <taxon>Saccharomycotina</taxon>
        <taxon>Saccharomycetes</taxon>
        <taxon>Saccharomycetales</taxon>
        <taxon>Saccharomycetaceae</taxon>
        <taxon>Saccharomyces</taxon>
    </lineage>
</organism>
<evidence type="ECO:0000269" key="1">
    <source>
    </source>
</evidence>
<evidence type="ECO:0000269" key="2">
    <source>
    </source>
</evidence>
<evidence type="ECO:0000269" key="3">
    <source>
    </source>
</evidence>
<evidence type="ECO:0000305" key="4"/>
<evidence type="ECO:0007744" key="5">
    <source>
    </source>
</evidence>
<evidence type="ECO:0007744" key="6">
    <source>
    </source>
</evidence>
<keyword id="KW-0007">Acetylation</keyword>
<keyword id="KW-0963">Cytoplasm</keyword>
<keyword id="KW-0539">Nucleus</keyword>
<keyword id="KW-0597">Phosphoprotein</keyword>
<keyword id="KW-0647">Proteasome</keyword>
<keyword id="KW-1185">Reference proteome</keyword>
<keyword id="KW-0677">Repeat</keyword>
<dbReference type="EMBL" id="U11583">
    <property type="protein sequence ID" value="AAB65042.1"/>
    <property type="molecule type" value="Genomic_DNA"/>
</dbReference>
<dbReference type="EMBL" id="BK006934">
    <property type="protein sequence ID" value="DAA06655.1"/>
    <property type="molecule type" value="Genomic_DNA"/>
</dbReference>
<dbReference type="PIR" id="S48938">
    <property type="entry name" value="S48938"/>
</dbReference>
<dbReference type="RefSeq" id="NP_011833.1">
    <property type="nucleotide sequence ID" value="NM_001179110.1"/>
</dbReference>
<dbReference type="BioGRID" id="36392">
    <property type="interactions" value="239"/>
</dbReference>
<dbReference type="DIP" id="DIP-6563N"/>
<dbReference type="FunCoup" id="P38737">
    <property type="interactions" value="1189"/>
</dbReference>
<dbReference type="IntAct" id="P38737">
    <property type="interactions" value="63"/>
</dbReference>
<dbReference type="MINT" id="P38737"/>
<dbReference type="STRING" id="4932.YHL030W"/>
<dbReference type="iPTMnet" id="P38737"/>
<dbReference type="PaxDb" id="4932-YHL030W"/>
<dbReference type="PeptideAtlas" id="P38737"/>
<dbReference type="EnsemblFungi" id="YHL030W_mRNA">
    <property type="protein sequence ID" value="YHL030W"/>
    <property type="gene ID" value="YHL030W"/>
</dbReference>
<dbReference type="GeneID" id="856355"/>
<dbReference type="KEGG" id="sce:YHL030W"/>
<dbReference type="AGR" id="SGD:S000001022"/>
<dbReference type="SGD" id="S000001022">
    <property type="gene designation" value="ECM29"/>
</dbReference>
<dbReference type="VEuPathDB" id="FungiDB:YHL030W"/>
<dbReference type="eggNOG" id="KOG0915">
    <property type="taxonomic scope" value="Eukaryota"/>
</dbReference>
<dbReference type="GeneTree" id="ENSGT00940000153612"/>
<dbReference type="HOGENOM" id="CLU_000880_1_1_1"/>
<dbReference type="InParanoid" id="P38737"/>
<dbReference type="OMA" id="CRIKDIE"/>
<dbReference type="OrthoDB" id="16066at2759"/>
<dbReference type="BioCyc" id="YEAST:G3O-31050-MONOMER"/>
<dbReference type="BioGRID-ORCS" id="856355">
    <property type="hits" value="2 hits in 10 CRISPR screens"/>
</dbReference>
<dbReference type="PRO" id="PR:P38737"/>
<dbReference type="Proteomes" id="UP000002311">
    <property type="component" value="Chromosome VIII"/>
</dbReference>
<dbReference type="RNAct" id="P38737">
    <property type="molecule type" value="protein"/>
</dbReference>
<dbReference type="GO" id="GO:0005737">
    <property type="term" value="C:cytoplasm"/>
    <property type="evidence" value="ECO:0007005"/>
    <property type="project" value="SGD"/>
</dbReference>
<dbReference type="GO" id="GO:0005634">
    <property type="term" value="C:nucleus"/>
    <property type="evidence" value="ECO:0000314"/>
    <property type="project" value="SGD"/>
</dbReference>
<dbReference type="GO" id="GO:0000502">
    <property type="term" value="C:proteasome complex"/>
    <property type="evidence" value="ECO:0000314"/>
    <property type="project" value="SGD"/>
</dbReference>
<dbReference type="GO" id="GO:0042030">
    <property type="term" value="F:ATPase inhibitor activity"/>
    <property type="evidence" value="ECO:0000315"/>
    <property type="project" value="SGD"/>
</dbReference>
<dbReference type="GO" id="GO:0060090">
    <property type="term" value="F:molecular adaptor activity"/>
    <property type="evidence" value="ECO:0000314"/>
    <property type="project" value="SGD"/>
</dbReference>
<dbReference type="GO" id="GO:0036503">
    <property type="term" value="P:ERAD pathway"/>
    <property type="evidence" value="ECO:0000318"/>
    <property type="project" value="GO_Central"/>
</dbReference>
<dbReference type="GO" id="GO:0043248">
    <property type="term" value="P:proteasome assembly"/>
    <property type="evidence" value="ECO:0000314"/>
    <property type="project" value="SGD"/>
</dbReference>
<dbReference type="FunFam" id="1.25.10.10:FF:000779">
    <property type="entry name" value="Proteasome component ECM29"/>
    <property type="match status" value="1"/>
</dbReference>
<dbReference type="Gene3D" id="1.25.10.10">
    <property type="entry name" value="Leucine-rich Repeat Variant"/>
    <property type="match status" value="3"/>
</dbReference>
<dbReference type="InterPro" id="IPR011989">
    <property type="entry name" value="ARM-like"/>
</dbReference>
<dbReference type="InterPro" id="IPR016024">
    <property type="entry name" value="ARM-type_fold"/>
</dbReference>
<dbReference type="InterPro" id="IPR024372">
    <property type="entry name" value="Ecm29_N"/>
</dbReference>
<dbReference type="InterPro" id="IPR055443">
    <property type="entry name" value="HEAT_ECM29"/>
</dbReference>
<dbReference type="PANTHER" id="PTHR23346:SF19">
    <property type="entry name" value="PROTEASOME ADAPTER AND SCAFFOLD PROTEIN ECM29"/>
    <property type="match status" value="1"/>
</dbReference>
<dbReference type="PANTHER" id="PTHR23346">
    <property type="entry name" value="TRANSLATIONAL ACTIVATOR GCN1-RELATED"/>
    <property type="match status" value="1"/>
</dbReference>
<dbReference type="Pfam" id="PF13001">
    <property type="entry name" value="ECM29_N"/>
    <property type="match status" value="1"/>
</dbReference>
<dbReference type="Pfam" id="PF24492">
    <property type="entry name" value="HEAT_ECM29"/>
    <property type="match status" value="1"/>
</dbReference>
<dbReference type="SUPFAM" id="SSF48371">
    <property type="entry name" value="ARM repeat"/>
    <property type="match status" value="2"/>
</dbReference>